<proteinExistence type="evidence at protein level"/>
<name>BSZ7_HORVU</name>
<keyword id="KW-0007">Acetylation</keyword>
<keyword id="KW-0903">Direct protein sequencing</keyword>
<keyword id="KW-0646">Protease inhibitor</keyword>
<keyword id="KW-0722">Serine protease inhibitor</keyword>
<organism>
    <name type="scientific">Hordeum vulgare</name>
    <name type="common">Barley</name>
    <dbReference type="NCBI Taxonomy" id="4513"/>
    <lineage>
        <taxon>Eukaryota</taxon>
        <taxon>Viridiplantae</taxon>
        <taxon>Streptophyta</taxon>
        <taxon>Embryophyta</taxon>
        <taxon>Tracheophyta</taxon>
        <taxon>Spermatophyta</taxon>
        <taxon>Magnoliopsida</taxon>
        <taxon>Liliopsida</taxon>
        <taxon>Poales</taxon>
        <taxon>Poaceae</taxon>
        <taxon>BOP clade</taxon>
        <taxon>Pooideae</taxon>
        <taxon>Triticodae</taxon>
        <taxon>Triticeae</taxon>
        <taxon>Hordeinae</taxon>
        <taxon>Hordeum</taxon>
    </lineage>
</organism>
<accession>Q43492</accession>
<evidence type="ECO:0000250" key="1"/>
<evidence type="ECO:0000269" key="2">
    <source>
    </source>
</evidence>
<evidence type="ECO:0000269" key="3">
    <source>
    </source>
</evidence>
<evidence type="ECO:0000305" key="4"/>
<gene>
    <name type="primary">PAZ7</name>
</gene>
<dbReference type="EMBL" id="X95277">
    <property type="protein sequence ID" value="CAA64599.1"/>
    <property type="molecule type" value="mRNA"/>
</dbReference>
<dbReference type="PIR" id="T06183">
    <property type="entry name" value="T06183"/>
</dbReference>
<dbReference type="SMR" id="Q43492"/>
<dbReference type="MEROPS" id="I04.032"/>
<dbReference type="iPTMnet" id="Q43492"/>
<dbReference type="GO" id="GO:0005615">
    <property type="term" value="C:extracellular space"/>
    <property type="evidence" value="ECO:0007669"/>
    <property type="project" value="InterPro"/>
</dbReference>
<dbReference type="GO" id="GO:0004867">
    <property type="term" value="F:serine-type endopeptidase inhibitor activity"/>
    <property type="evidence" value="ECO:0007669"/>
    <property type="project" value="UniProtKB-KW"/>
</dbReference>
<dbReference type="CDD" id="cd02043">
    <property type="entry name" value="serpinP_plants"/>
    <property type="match status" value="1"/>
</dbReference>
<dbReference type="Gene3D" id="2.30.39.10">
    <property type="entry name" value="Alpha-1-antitrypsin, domain 1"/>
    <property type="match status" value="1"/>
</dbReference>
<dbReference type="Gene3D" id="3.30.497.10">
    <property type="entry name" value="Antithrombin, subunit I, domain 2"/>
    <property type="match status" value="1"/>
</dbReference>
<dbReference type="InterPro" id="IPR023795">
    <property type="entry name" value="Serpin_CS"/>
</dbReference>
<dbReference type="InterPro" id="IPR023796">
    <property type="entry name" value="Serpin_dom"/>
</dbReference>
<dbReference type="InterPro" id="IPR000215">
    <property type="entry name" value="Serpin_fam"/>
</dbReference>
<dbReference type="InterPro" id="IPR036186">
    <property type="entry name" value="Serpin_sf"/>
</dbReference>
<dbReference type="InterPro" id="IPR042178">
    <property type="entry name" value="Serpin_sf_1"/>
</dbReference>
<dbReference type="InterPro" id="IPR042185">
    <property type="entry name" value="Serpin_sf_2"/>
</dbReference>
<dbReference type="PANTHER" id="PTHR11461">
    <property type="entry name" value="SERINE PROTEASE INHIBITOR, SERPIN"/>
    <property type="match status" value="1"/>
</dbReference>
<dbReference type="PANTHER" id="PTHR11461:SF310">
    <property type="entry name" value="SERPIN DOMAIN-CONTAINING PROTEIN"/>
    <property type="match status" value="1"/>
</dbReference>
<dbReference type="Pfam" id="PF00079">
    <property type="entry name" value="Serpin"/>
    <property type="match status" value="1"/>
</dbReference>
<dbReference type="SMART" id="SM00093">
    <property type="entry name" value="SERPIN"/>
    <property type="match status" value="1"/>
</dbReference>
<dbReference type="SUPFAM" id="SSF56574">
    <property type="entry name" value="Serpins"/>
    <property type="match status" value="1"/>
</dbReference>
<dbReference type="PROSITE" id="PS00284">
    <property type="entry name" value="SERPIN"/>
    <property type="match status" value="1"/>
</dbReference>
<reference key="1">
    <citation type="journal article" date="1996" name="Biochim. Biophys. Acta">
        <title>Primary structure of the plant serpin BSZ7 having the capacity of chymotrypsin inhibition.</title>
        <authorList>
            <person name="Rasmussen S.K."/>
            <person name="Klausen J."/>
            <person name="Hejgaard J."/>
            <person name="Svensson B."/>
            <person name="Svendsen I."/>
        </authorList>
    </citation>
    <scope>NUCLEOTIDE SEQUENCE [MRNA]</scope>
    <scope>PROTEIN SEQUENCE OF 2-18; 23-46; 62-96; 102-129; 107-131; 154-174; 175-184; 196-215; 206-236; 233-242; 243-259; 246-268; 264-277; 286-293; 293-322; 320-335; 320-341; 326-341; 359-377 AND 378-396</scope>
    <scope>FUNCTION</scope>
    <scope>ACETYLATION AT ALA-2</scope>
    <source>
        <strain>cv. Bomi</strain>
        <tissue>Endosperm</tissue>
    </source>
</reference>
<reference key="2">
    <citation type="journal article" date="2003" name="J. Exp. Bot.">
        <title>Differential gene expression for suicide-substrate serine proteinase inhibitors (serpins) in vegetative and grain tissues of barley.</title>
        <authorList>
            <person name="Roberts T.H."/>
            <person name="Marttila S."/>
            <person name="Rasmussen S.K."/>
            <person name="Hejgaard J."/>
        </authorList>
    </citation>
    <scope>TISSUE SPECIFICITY</scope>
</reference>
<feature type="initiator methionine" description="Removed" evidence="3">
    <location>
        <position position="1"/>
    </location>
</feature>
<feature type="chain" id="PRO_5000146725" description="Serpin-Z7">
    <location>
        <begin position="2"/>
        <end position="397"/>
    </location>
</feature>
<feature type="region of interest" description="RCL">
    <location>
        <begin position="344"/>
        <end position="368"/>
    </location>
</feature>
<feature type="site" description="Reactive bond">
    <location>
        <begin position="358"/>
        <end position="359"/>
    </location>
</feature>
<feature type="modified residue" description="N-acetylalanine" evidence="3">
    <location>
        <position position="2"/>
    </location>
</feature>
<feature type="sequence conflict" description="In Ref. 1." evidence="4" ref="1">
    <original>T</original>
    <variation>A</variation>
    <location>
        <position position="173"/>
    </location>
</feature>
<feature type="sequence conflict" description="In Ref. 1." evidence="4" ref="1">
    <original>I</original>
    <variation>T</variation>
    <location>
        <position position="292"/>
    </location>
</feature>
<feature type="sequence conflict" description="In Ref. 1." evidence="4" ref="1">
    <original>K</original>
    <variation>E</variation>
    <location>
        <position position="303"/>
    </location>
</feature>
<feature type="sequence conflict" description="In Ref. 1." evidence="4" ref="1">
    <original>M</original>
    <variation>L</variation>
    <location>
        <position position="325"/>
    </location>
</feature>
<comment type="function">
    <text evidence="3">Inhibits chymotrypsin in vitro.</text>
</comment>
<comment type="tissue specificity">
    <text evidence="2">Highly expressed in endosperm, at intermediate level in embryo and at lower levels in roots.</text>
</comment>
<comment type="domain">
    <text evidence="1">The reactive center loop (RCL) extends out from the body of the protein and directs binding to the target protease. The protease cleaves the serpin at the reactive site within the RCL, establishing a covalent linkage between the carboxyl group of the serpin reactive site and the serine hydroxyl of the protease. The resulting inactive serpin-protease complex is highly stable (By similarity).</text>
</comment>
<comment type="similarity">
    <text evidence="4">Belongs to the serpin family.</text>
</comment>
<protein>
    <recommendedName>
        <fullName>Serpin-Z7</fullName>
    </recommendedName>
    <alternativeName>
        <fullName>BSZ7</fullName>
    </alternativeName>
    <alternativeName>
        <fullName>HorvuZ7</fullName>
    </alternativeName>
</protein>
<sequence>MATTLTTDLRLSIAHQTRFGLRLASAISSDPESAATNVAFSPVSLHVALSLVAAGARGATRDQLVAVLGGGGAGEAEALQSLAEQVVQFVLADASINSGPRIAFANGVFVDASLSLKPSFQELAVCNYKSEVQSVDFKTKAPEAASQVNSWVKNVTAGLIEEILPAGSIDNTTRLVLGNALYFKGLWTKKFDESKTKYDDFHLLNGSTVQTPFMSSTNKQYLSSSDGLKVLKLPYQHGGDNRQFSMYILLPEAHDGLSRLAQKLSTEPDFLENRIPTEEVEVGQFMLPKFKISFGFEANKLLKTLGLQLPFSLEANLSEMVNSPMGLYISSVFHKTFVEVDEEGTKAGAATGDVIVDRSLPIRMDFVANHPFLFLIREDIAGVVLFIGHVANPAVSS</sequence>